<proteinExistence type="inferred from homology"/>
<keyword id="KW-0227">DNA damage</keyword>
<keyword id="KW-0234">DNA repair</keyword>
<keyword id="KW-0238">DNA-binding</keyword>
<keyword id="KW-0326">Glycosidase</keyword>
<keyword id="KW-0378">Hydrolase</keyword>
<keyword id="KW-0456">Lyase</keyword>
<keyword id="KW-0479">Metal-binding</keyword>
<keyword id="KW-0511">Multifunctional enzyme</keyword>
<keyword id="KW-1185">Reference proteome</keyword>
<keyword id="KW-0862">Zinc</keyword>
<keyword id="KW-0863">Zinc-finger</keyword>
<name>FPG_BREBN</name>
<feature type="initiator methionine" description="Removed" evidence="1">
    <location>
        <position position="1"/>
    </location>
</feature>
<feature type="chain" id="PRO_1000118880" description="Formamidopyrimidine-DNA glycosylase">
    <location>
        <begin position="2"/>
        <end position="276"/>
    </location>
</feature>
<feature type="zinc finger region" description="FPG-type" evidence="2">
    <location>
        <begin position="240"/>
        <end position="274"/>
    </location>
</feature>
<feature type="active site" description="Schiff-base intermediate with DNA" evidence="2">
    <location>
        <position position="2"/>
    </location>
</feature>
<feature type="active site" description="Proton donor" evidence="2">
    <location>
        <position position="3"/>
    </location>
</feature>
<feature type="active site" description="Proton donor; for beta-elimination activity" evidence="2">
    <location>
        <position position="60"/>
    </location>
</feature>
<feature type="active site" description="Proton donor; for delta-elimination activity" evidence="2">
    <location>
        <position position="264"/>
    </location>
</feature>
<feature type="binding site" evidence="2">
    <location>
        <position position="93"/>
    </location>
    <ligand>
        <name>DNA</name>
        <dbReference type="ChEBI" id="CHEBI:16991"/>
    </ligand>
</feature>
<feature type="binding site" evidence="2">
    <location>
        <position position="112"/>
    </location>
    <ligand>
        <name>DNA</name>
        <dbReference type="ChEBI" id="CHEBI:16991"/>
    </ligand>
</feature>
<feature type="binding site" evidence="2">
    <location>
        <position position="155"/>
    </location>
    <ligand>
        <name>DNA</name>
        <dbReference type="ChEBI" id="CHEBI:16991"/>
    </ligand>
</feature>
<gene>
    <name evidence="2" type="primary">mutM</name>
    <name evidence="2" type="synonym">fpg</name>
    <name type="ordered locus">BBR47_14060</name>
</gene>
<reference key="1">
    <citation type="submission" date="2005-03" db="EMBL/GenBank/DDBJ databases">
        <title>Brevibacillus brevis strain 47, complete genome.</title>
        <authorList>
            <person name="Hosoyama A."/>
            <person name="Yamada R."/>
            <person name="Hongo Y."/>
            <person name="Terui Y."/>
            <person name="Ankai A."/>
            <person name="Masuyama W."/>
            <person name="Sekiguchi M."/>
            <person name="Takeda T."/>
            <person name="Asano K."/>
            <person name="Ohji S."/>
            <person name="Ichikawa N."/>
            <person name="Narita S."/>
            <person name="Aoki N."/>
            <person name="Miura H."/>
            <person name="Matsushita S."/>
            <person name="Sekigawa T."/>
            <person name="Yamagata H."/>
            <person name="Yoshikawa H."/>
            <person name="Udaka S."/>
            <person name="Tanikawa S."/>
            <person name="Fujita N."/>
        </authorList>
    </citation>
    <scope>NUCLEOTIDE SEQUENCE [LARGE SCALE GENOMIC DNA]</scope>
    <source>
        <strain>47 / JCM 6285 / NBRC 100599</strain>
    </source>
</reference>
<accession>C0Z7Z0</accession>
<sequence length="276" mass="30891">MPELPEVETVVRTLRGLVMGKTIERVSVHLARIVRQPDDVEAFKSLLVGQTIQDIQRRAKFIQFFLNEDVLVSHLRMEGRYGVYQADDPVEKHTHVVFHFTDGTELRYRDVRQFGTMDLFPKGKETTIGPLAKLGVEPLDKSFTPEVLGKLLKGRSTKIKPLLLNQECIVGLGNIYVDESLFKAGIHPEKPAGKLTDKEVIRLHESIVSTLQEAVEQGGSSIKSYVNGQGEMGMFQQSLLVYGRKDEACTKCGAEIIRFVVGGRGTHICPDCQKNQ</sequence>
<evidence type="ECO:0000250" key="1"/>
<evidence type="ECO:0000255" key="2">
    <source>
        <dbReference type="HAMAP-Rule" id="MF_00103"/>
    </source>
</evidence>
<dbReference type="EC" id="3.2.2.23" evidence="2"/>
<dbReference type="EC" id="4.2.99.18" evidence="2"/>
<dbReference type="EMBL" id="AP008955">
    <property type="protein sequence ID" value="BAH42383.1"/>
    <property type="molecule type" value="Genomic_DNA"/>
</dbReference>
<dbReference type="RefSeq" id="WP_012685132.1">
    <property type="nucleotide sequence ID" value="NC_012491.1"/>
</dbReference>
<dbReference type="SMR" id="C0Z7Z0"/>
<dbReference type="STRING" id="358681.BBR47_14060"/>
<dbReference type="KEGG" id="bbe:BBR47_14060"/>
<dbReference type="eggNOG" id="COG0266">
    <property type="taxonomic scope" value="Bacteria"/>
</dbReference>
<dbReference type="HOGENOM" id="CLU_038423_1_2_9"/>
<dbReference type="Proteomes" id="UP000001877">
    <property type="component" value="Chromosome"/>
</dbReference>
<dbReference type="GO" id="GO:0034039">
    <property type="term" value="F:8-oxo-7,8-dihydroguanine DNA N-glycosylase activity"/>
    <property type="evidence" value="ECO:0007669"/>
    <property type="project" value="TreeGrafter"/>
</dbReference>
<dbReference type="GO" id="GO:0140078">
    <property type="term" value="F:class I DNA-(apurinic or apyrimidinic site) endonuclease activity"/>
    <property type="evidence" value="ECO:0007669"/>
    <property type="project" value="UniProtKB-EC"/>
</dbReference>
<dbReference type="GO" id="GO:0003684">
    <property type="term" value="F:damaged DNA binding"/>
    <property type="evidence" value="ECO:0007669"/>
    <property type="project" value="InterPro"/>
</dbReference>
<dbReference type="GO" id="GO:0008270">
    <property type="term" value="F:zinc ion binding"/>
    <property type="evidence" value="ECO:0007669"/>
    <property type="project" value="UniProtKB-UniRule"/>
</dbReference>
<dbReference type="GO" id="GO:0006284">
    <property type="term" value="P:base-excision repair"/>
    <property type="evidence" value="ECO:0007669"/>
    <property type="project" value="InterPro"/>
</dbReference>
<dbReference type="CDD" id="cd08966">
    <property type="entry name" value="EcFpg-like_N"/>
    <property type="match status" value="1"/>
</dbReference>
<dbReference type="FunFam" id="1.10.8.50:FF:000003">
    <property type="entry name" value="Formamidopyrimidine-DNA glycosylase"/>
    <property type="match status" value="1"/>
</dbReference>
<dbReference type="FunFam" id="3.20.190.10:FF:000001">
    <property type="entry name" value="Formamidopyrimidine-DNA glycosylase"/>
    <property type="match status" value="1"/>
</dbReference>
<dbReference type="Gene3D" id="1.10.8.50">
    <property type="match status" value="1"/>
</dbReference>
<dbReference type="Gene3D" id="3.20.190.10">
    <property type="entry name" value="MutM-like, N-terminal"/>
    <property type="match status" value="1"/>
</dbReference>
<dbReference type="HAMAP" id="MF_00103">
    <property type="entry name" value="Fapy_DNA_glycosyl"/>
    <property type="match status" value="1"/>
</dbReference>
<dbReference type="InterPro" id="IPR015886">
    <property type="entry name" value="DNA_glyclase/AP_lyase_DNA-bd"/>
</dbReference>
<dbReference type="InterPro" id="IPR015887">
    <property type="entry name" value="DNA_glyclase_Znf_dom_DNA_BS"/>
</dbReference>
<dbReference type="InterPro" id="IPR020629">
    <property type="entry name" value="Formamido-pyr_DNA_Glyclase"/>
</dbReference>
<dbReference type="InterPro" id="IPR012319">
    <property type="entry name" value="FPG_cat"/>
</dbReference>
<dbReference type="InterPro" id="IPR035937">
    <property type="entry name" value="MutM-like_N-ter"/>
</dbReference>
<dbReference type="InterPro" id="IPR010979">
    <property type="entry name" value="Ribosomal_uS13-like_H2TH"/>
</dbReference>
<dbReference type="InterPro" id="IPR000214">
    <property type="entry name" value="Znf_DNA_glyclase/AP_lyase"/>
</dbReference>
<dbReference type="InterPro" id="IPR010663">
    <property type="entry name" value="Znf_FPG/IleRS"/>
</dbReference>
<dbReference type="NCBIfam" id="TIGR00577">
    <property type="entry name" value="fpg"/>
    <property type="match status" value="1"/>
</dbReference>
<dbReference type="NCBIfam" id="NF002211">
    <property type="entry name" value="PRK01103.1"/>
    <property type="match status" value="1"/>
</dbReference>
<dbReference type="PANTHER" id="PTHR22993">
    <property type="entry name" value="FORMAMIDOPYRIMIDINE-DNA GLYCOSYLASE"/>
    <property type="match status" value="1"/>
</dbReference>
<dbReference type="PANTHER" id="PTHR22993:SF9">
    <property type="entry name" value="FORMAMIDOPYRIMIDINE-DNA GLYCOSYLASE"/>
    <property type="match status" value="1"/>
</dbReference>
<dbReference type="Pfam" id="PF01149">
    <property type="entry name" value="Fapy_DNA_glyco"/>
    <property type="match status" value="1"/>
</dbReference>
<dbReference type="Pfam" id="PF06831">
    <property type="entry name" value="H2TH"/>
    <property type="match status" value="1"/>
</dbReference>
<dbReference type="Pfam" id="PF06827">
    <property type="entry name" value="zf-FPG_IleRS"/>
    <property type="match status" value="1"/>
</dbReference>
<dbReference type="SMART" id="SM00898">
    <property type="entry name" value="Fapy_DNA_glyco"/>
    <property type="match status" value="1"/>
</dbReference>
<dbReference type="SMART" id="SM01232">
    <property type="entry name" value="H2TH"/>
    <property type="match status" value="1"/>
</dbReference>
<dbReference type="SUPFAM" id="SSF57716">
    <property type="entry name" value="Glucocorticoid receptor-like (DNA-binding domain)"/>
    <property type="match status" value="1"/>
</dbReference>
<dbReference type="SUPFAM" id="SSF81624">
    <property type="entry name" value="N-terminal domain of MutM-like DNA repair proteins"/>
    <property type="match status" value="1"/>
</dbReference>
<dbReference type="SUPFAM" id="SSF46946">
    <property type="entry name" value="S13-like H2TH domain"/>
    <property type="match status" value="1"/>
</dbReference>
<dbReference type="PROSITE" id="PS51068">
    <property type="entry name" value="FPG_CAT"/>
    <property type="match status" value="1"/>
</dbReference>
<dbReference type="PROSITE" id="PS01242">
    <property type="entry name" value="ZF_FPG_1"/>
    <property type="match status" value="1"/>
</dbReference>
<dbReference type="PROSITE" id="PS51066">
    <property type="entry name" value="ZF_FPG_2"/>
    <property type="match status" value="1"/>
</dbReference>
<comment type="function">
    <text evidence="2">Involved in base excision repair of DNA damaged by oxidation or by mutagenic agents. Acts as a DNA glycosylase that recognizes and removes damaged bases. Has a preference for oxidized purines, such as 7,8-dihydro-8-oxoguanine (8-oxoG). Has AP (apurinic/apyrimidinic) lyase activity and introduces nicks in the DNA strand. Cleaves the DNA backbone by beta-delta elimination to generate a single-strand break at the site of the removed base with both 3'- and 5'-phosphates.</text>
</comment>
<comment type="catalytic activity">
    <reaction evidence="2">
        <text>Hydrolysis of DNA containing ring-opened 7-methylguanine residues, releasing 2,6-diamino-4-hydroxy-5-(N-methyl)formamidopyrimidine.</text>
        <dbReference type="EC" id="3.2.2.23"/>
    </reaction>
</comment>
<comment type="catalytic activity">
    <reaction evidence="2">
        <text>2'-deoxyribonucleotide-(2'-deoxyribose 5'-phosphate)-2'-deoxyribonucleotide-DNA = a 3'-end 2'-deoxyribonucleotide-(2,3-dehydro-2,3-deoxyribose 5'-phosphate)-DNA + a 5'-end 5'-phospho-2'-deoxyribonucleoside-DNA + H(+)</text>
        <dbReference type="Rhea" id="RHEA:66592"/>
        <dbReference type="Rhea" id="RHEA-COMP:13180"/>
        <dbReference type="Rhea" id="RHEA-COMP:16897"/>
        <dbReference type="Rhea" id="RHEA-COMP:17067"/>
        <dbReference type="ChEBI" id="CHEBI:15378"/>
        <dbReference type="ChEBI" id="CHEBI:136412"/>
        <dbReference type="ChEBI" id="CHEBI:157695"/>
        <dbReference type="ChEBI" id="CHEBI:167181"/>
        <dbReference type="EC" id="4.2.99.18"/>
    </reaction>
</comment>
<comment type="cofactor">
    <cofactor evidence="2">
        <name>Zn(2+)</name>
        <dbReference type="ChEBI" id="CHEBI:29105"/>
    </cofactor>
    <text evidence="2">Binds 1 zinc ion per subunit.</text>
</comment>
<comment type="subunit">
    <text evidence="2">Monomer.</text>
</comment>
<comment type="similarity">
    <text evidence="2">Belongs to the FPG family.</text>
</comment>
<organism>
    <name type="scientific">Brevibacillus brevis (strain 47 / JCM 6285 / NBRC 100599)</name>
    <dbReference type="NCBI Taxonomy" id="358681"/>
    <lineage>
        <taxon>Bacteria</taxon>
        <taxon>Bacillati</taxon>
        <taxon>Bacillota</taxon>
        <taxon>Bacilli</taxon>
        <taxon>Bacillales</taxon>
        <taxon>Paenibacillaceae</taxon>
        <taxon>Brevibacillus</taxon>
    </lineage>
</organism>
<protein>
    <recommendedName>
        <fullName evidence="2">Formamidopyrimidine-DNA glycosylase</fullName>
        <shortName evidence="2">Fapy-DNA glycosylase</shortName>
        <ecNumber evidence="2">3.2.2.23</ecNumber>
    </recommendedName>
    <alternativeName>
        <fullName evidence="2">DNA-(apurinic or apyrimidinic site) lyase MutM</fullName>
        <shortName evidence="2">AP lyase MutM</shortName>
        <ecNumber evidence="2">4.2.99.18</ecNumber>
    </alternativeName>
</protein>